<organism>
    <name type="scientific">Sylvirana guentheri</name>
    <name type="common">Gunther's frog</name>
    <name type="synonym">Rana guentheri</name>
    <dbReference type="NCBI Taxonomy" id="110109"/>
    <lineage>
        <taxon>Eukaryota</taxon>
        <taxon>Metazoa</taxon>
        <taxon>Chordata</taxon>
        <taxon>Craniata</taxon>
        <taxon>Vertebrata</taxon>
        <taxon>Euteleostomi</taxon>
        <taxon>Amphibia</taxon>
        <taxon>Batrachia</taxon>
        <taxon>Anura</taxon>
        <taxon>Neobatrachia</taxon>
        <taxon>Ranoidea</taxon>
        <taxon>Ranidae</taxon>
        <taxon>Sylvirana</taxon>
    </lineage>
</organism>
<dbReference type="SMR" id="P84860"/>
<dbReference type="GO" id="GO:0005576">
    <property type="term" value="C:extracellular region"/>
    <property type="evidence" value="ECO:0007669"/>
    <property type="project" value="UniProtKB-SubCell"/>
</dbReference>
<dbReference type="GO" id="GO:0042742">
    <property type="term" value="P:defense response to bacterium"/>
    <property type="evidence" value="ECO:0007669"/>
    <property type="project" value="UniProtKB-KW"/>
</dbReference>
<protein>
    <recommendedName>
        <fullName>Brevinin-2GHa</fullName>
    </recommendedName>
    <alternativeName>
        <fullName>AMP-1</fullName>
    </alternativeName>
</protein>
<name>BR2A_SYLGU</name>
<comment type="function">
    <text evidence="2">Antimicrobial peptide. Active against the Gram-positive bacteria S.aureus FDA209P (MIC=14.9 ug/ml) and B.subtilis ATCC 6633 (MIC&gt;64 ug/ml), but not active against the Gram-negative bacterium E.coli or the fungus C.albicans.</text>
</comment>
<comment type="subcellular location">
    <subcellularLocation>
        <location evidence="2">Secreted</location>
    </subcellularLocation>
</comment>
<comment type="tissue specificity">
    <text evidence="2">Expressed by the skin glands.</text>
</comment>
<comment type="mass spectrometry"/>
<comment type="similarity">
    <text evidence="1">Belongs to the frog skin active peptide (FSAP) family. Brevinin subfamily.</text>
</comment>
<accession>P84860</accession>
<sequence>GFSSLFKAGAKYLLKSVGKAGAQQLACKAANNCA</sequence>
<evidence type="ECO:0000255" key="1"/>
<evidence type="ECO:0000269" key="2">
    <source>
    </source>
</evidence>
<evidence type="ECO:0000305" key="3"/>
<reference evidence="3" key="1">
    <citation type="journal article" date="2006" name="Peptides">
        <title>Purification and characterization of novel antimicrobial peptides from the skin secretion of Hylarana guentheri.</title>
        <authorList>
            <person name="Zhou J."/>
            <person name="McClean S."/>
            <person name="Thompson A."/>
            <person name="Zhang Y."/>
            <person name="Shaw C."/>
            <person name="Rao P."/>
            <person name="Bjourson A.J."/>
        </authorList>
    </citation>
    <scope>PROTEIN SEQUENCE</scope>
    <scope>FUNCTION</scope>
    <scope>SUBCELLULAR LOCATION</scope>
    <scope>TISSUE SPECIFICITY</scope>
    <scope>DISULFIDE BOND</scope>
    <scope>MASS SPECTROMETRY</scope>
    <source>
        <tissue evidence="2">Skin secretion</tissue>
    </source>
</reference>
<keyword id="KW-0878">Amphibian defense peptide</keyword>
<keyword id="KW-0044">Antibiotic</keyword>
<keyword id="KW-0929">Antimicrobial</keyword>
<keyword id="KW-0903">Direct protein sequencing</keyword>
<keyword id="KW-1015">Disulfide bond</keyword>
<keyword id="KW-0964">Secreted</keyword>
<feature type="peptide" id="PRO_0000271185" description="Brevinin-2GHa" evidence="2">
    <location>
        <begin position="1"/>
        <end position="34"/>
    </location>
</feature>
<feature type="disulfide bond" evidence="2">
    <location>
        <begin position="27"/>
        <end position="33"/>
    </location>
</feature>
<proteinExistence type="evidence at protein level"/>